<reference key="1">
    <citation type="submission" date="2009-03" db="EMBL/GenBank/DDBJ databases">
        <title>Complete genome sequence of Edwardsiella ictaluri 93-146.</title>
        <authorList>
            <person name="Williams M.L."/>
            <person name="Gillaspy A.F."/>
            <person name="Dyer D.W."/>
            <person name="Thune R.L."/>
            <person name="Waldbieser G.C."/>
            <person name="Schuster S.C."/>
            <person name="Gipson J."/>
            <person name="Zaitshik J."/>
            <person name="Landry C."/>
            <person name="Lawrence M.L."/>
        </authorList>
    </citation>
    <scope>NUCLEOTIDE SEQUENCE [LARGE SCALE GENOMIC DNA]</scope>
    <source>
        <strain>93-146</strain>
    </source>
</reference>
<gene>
    <name evidence="1" type="primary">prfC</name>
    <name type="ordered locus">NT01EI_0554</name>
</gene>
<feature type="chain" id="PRO_1000202467" description="Peptide chain release factor 3">
    <location>
        <begin position="1"/>
        <end position="529"/>
    </location>
</feature>
<feature type="domain" description="tr-type G">
    <location>
        <begin position="11"/>
        <end position="280"/>
    </location>
</feature>
<feature type="binding site" evidence="1">
    <location>
        <begin position="20"/>
        <end position="27"/>
    </location>
    <ligand>
        <name>GTP</name>
        <dbReference type="ChEBI" id="CHEBI:37565"/>
    </ligand>
</feature>
<feature type="binding site" evidence="1">
    <location>
        <begin position="88"/>
        <end position="92"/>
    </location>
    <ligand>
        <name>GTP</name>
        <dbReference type="ChEBI" id="CHEBI:37565"/>
    </ligand>
</feature>
<feature type="binding site" evidence="1">
    <location>
        <begin position="142"/>
        <end position="145"/>
    </location>
    <ligand>
        <name>GTP</name>
        <dbReference type="ChEBI" id="CHEBI:37565"/>
    </ligand>
</feature>
<proteinExistence type="inferred from homology"/>
<name>RF3_EDWI9</name>
<comment type="function">
    <text evidence="1">Increases the formation of ribosomal termination complexes and stimulates activities of RF-1 and RF-2. It binds guanine nucleotides and has strong preference for UGA stop codons. It may interact directly with the ribosome. The stimulation of RF-1 and RF-2 is significantly reduced by GTP and GDP, but not by GMP.</text>
</comment>
<comment type="subcellular location">
    <subcellularLocation>
        <location evidence="1">Cytoplasm</location>
    </subcellularLocation>
</comment>
<comment type="similarity">
    <text evidence="1">Belongs to the TRAFAC class translation factor GTPase superfamily. Classic translation factor GTPase family. PrfC subfamily.</text>
</comment>
<dbReference type="EMBL" id="CP001600">
    <property type="protein sequence ID" value="ACR67783.1"/>
    <property type="molecule type" value="Genomic_DNA"/>
</dbReference>
<dbReference type="RefSeq" id="WP_015869983.1">
    <property type="nucleotide sequence ID" value="NZ_CP169062.1"/>
</dbReference>
<dbReference type="SMR" id="C5BHI4"/>
<dbReference type="STRING" id="67780.B6E78_13480"/>
<dbReference type="GeneID" id="69537633"/>
<dbReference type="KEGG" id="eic:NT01EI_0554"/>
<dbReference type="PATRIC" id="fig|634503.3.peg.500"/>
<dbReference type="HOGENOM" id="CLU_002794_2_1_6"/>
<dbReference type="OrthoDB" id="9801472at2"/>
<dbReference type="Proteomes" id="UP000001485">
    <property type="component" value="Chromosome"/>
</dbReference>
<dbReference type="GO" id="GO:0005829">
    <property type="term" value="C:cytosol"/>
    <property type="evidence" value="ECO:0007669"/>
    <property type="project" value="TreeGrafter"/>
</dbReference>
<dbReference type="GO" id="GO:0005525">
    <property type="term" value="F:GTP binding"/>
    <property type="evidence" value="ECO:0007669"/>
    <property type="project" value="UniProtKB-UniRule"/>
</dbReference>
<dbReference type="GO" id="GO:0003924">
    <property type="term" value="F:GTPase activity"/>
    <property type="evidence" value="ECO:0007669"/>
    <property type="project" value="InterPro"/>
</dbReference>
<dbReference type="GO" id="GO:0097216">
    <property type="term" value="F:guanosine tetraphosphate binding"/>
    <property type="evidence" value="ECO:0007669"/>
    <property type="project" value="UniProtKB-ARBA"/>
</dbReference>
<dbReference type="GO" id="GO:0016150">
    <property type="term" value="F:translation release factor activity, codon nonspecific"/>
    <property type="evidence" value="ECO:0007669"/>
    <property type="project" value="TreeGrafter"/>
</dbReference>
<dbReference type="GO" id="GO:0016149">
    <property type="term" value="F:translation release factor activity, codon specific"/>
    <property type="evidence" value="ECO:0007669"/>
    <property type="project" value="UniProtKB-UniRule"/>
</dbReference>
<dbReference type="GO" id="GO:0006449">
    <property type="term" value="P:regulation of translational termination"/>
    <property type="evidence" value="ECO:0007669"/>
    <property type="project" value="UniProtKB-UniRule"/>
</dbReference>
<dbReference type="CDD" id="cd04169">
    <property type="entry name" value="RF3"/>
    <property type="match status" value="1"/>
</dbReference>
<dbReference type="CDD" id="cd03689">
    <property type="entry name" value="RF3_II"/>
    <property type="match status" value="1"/>
</dbReference>
<dbReference type="CDD" id="cd16259">
    <property type="entry name" value="RF3_III"/>
    <property type="match status" value="1"/>
</dbReference>
<dbReference type="FunFam" id="2.40.30.10:FF:000040">
    <property type="entry name" value="Peptide chain release factor 3"/>
    <property type="match status" value="1"/>
</dbReference>
<dbReference type="FunFam" id="3.30.70.3280:FF:000001">
    <property type="entry name" value="Peptide chain release factor 3"/>
    <property type="match status" value="1"/>
</dbReference>
<dbReference type="FunFam" id="3.40.50.300:FF:000184">
    <property type="entry name" value="Peptide chain release factor 3"/>
    <property type="match status" value="1"/>
</dbReference>
<dbReference type="FunFam" id="3.40.50.300:FF:000253">
    <property type="entry name" value="Peptide chain release factor 3"/>
    <property type="match status" value="1"/>
</dbReference>
<dbReference type="Gene3D" id="3.40.50.300">
    <property type="entry name" value="P-loop containing nucleotide triphosphate hydrolases"/>
    <property type="match status" value="3"/>
</dbReference>
<dbReference type="Gene3D" id="3.30.70.3280">
    <property type="entry name" value="Peptide chain release factor 3, domain III"/>
    <property type="match status" value="1"/>
</dbReference>
<dbReference type="HAMAP" id="MF_00072">
    <property type="entry name" value="Rel_fac_3"/>
    <property type="match status" value="1"/>
</dbReference>
<dbReference type="InterPro" id="IPR053905">
    <property type="entry name" value="EF-G-like_DII"/>
</dbReference>
<dbReference type="InterPro" id="IPR035647">
    <property type="entry name" value="EFG_III/V"/>
</dbReference>
<dbReference type="InterPro" id="IPR031157">
    <property type="entry name" value="G_TR_CS"/>
</dbReference>
<dbReference type="InterPro" id="IPR027417">
    <property type="entry name" value="P-loop_NTPase"/>
</dbReference>
<dbReference type="InterPro" id="IPR004548">
    <property type="entry name" value="PrfC"/>
</dbReference>
<dbReference type="InterPro" id="IPR032090">
    <property type="entry name" value="RF3_C"/>
</dbReference>
<dbReference type="InterPro" id="IPR038467">
    <property type="entry name" value="RF3_dom_3_sf"/>
</dbReference>
<dbReference type="InterPro" id="IPR041732">
    <property type="entry name" value="RF3_GTP-bd"/>
</dbReference>
<dbReference type="InterPro" id="IPR005225">
    <property type="entry name" value="Small_GTP-bd"/>
</dbReference>
<dbReference type="InterPro" id="IPR000795">
    <property type="entry name" value="T_Tr_GTP-bd_dom"/>
</dbReference>
<dbReference type="InterPro" id="IPR009000">
    <property type="entry name" value="Transl_B-barrel_sf"/>
</dbReference>
<dbReference type="NCBIfam" id="TIGR00503">
    <property type="entry name" value="prfC"/>
    <property type="match status" value="1"/>
</dbReference>
<dbReference type="NCBIfam" id="NF001964">
    <property type="entry name" value="PRK00741.1"/>
    <property type="match status" value="1"/>
</dbReference>
<dbReference type="NCBIfam" id="TIGR00231">
    <property type="entry name" value="small_GTP"/>
    <property type="match status" value="1"/>
</dbReference>
<dbReference type="PANTHER" id="PTHR43556">
    <property type="entry name" value="PEPTIDE CHAIN RELEASE FACTOR RF3"/>
    <property type="match status" value="1"/>
</dbReference>
<dbReference type="PANTHER" id="PTHR43556:SF2">
    <property type="entry name" value="PEPTIDE CHAIN RELEASE FACTOR RF3"/>
    <property type="match status" value="1"/>
</dbReference>
<dbReference type="Pfam" id="PF22042">
    <property type="entry name" value="EF-G_D2"/>
    <property type="match status" value="1"/>
</dbReference>
<dbReference type="Pfam" id="PF00009">
    <property type="entry name" value="GTP_EFTU"/>
    <property type="match status" value="1"/>
</dbReference>
<dbReference type="Pfam" id="PF16658">
    <property type="entry name" value="RF3_C"/>
    <property type="match status" value="1"/>
</dbReference>
<dbReference type="PRINTS" id="PR00315">
    <property type="entry name" value="ELONGATNFCT"/>
</dbReference>
<dbReference type="SUPFAM" id="SSF54980">
    <property type="entry name" value="EF-G C-terminal domain-like"/>
    <property type="match status" value="1"/>
</dbReference>
<dbReference type="SUPFAM" id="SSF52540">
    <property type="entry name" value="P-loop containing nucleoside triphosphate hydrolases"/>
    <property type="match status" value="1"/>
</dbReference>
<dbReference type="SUPFAM" id="SSF50447">
    <property type="entry name" value="Translation proteins"/>
    <property type="match status" value="1"/>
</dbReference>
<dbReference type="PROSITE" id="PS00301">
    <property type="entry name" value="G_TR_1"/>
    <property type="match status" value="1"/>
</dbReference>
<dbReference type="PROSITE" id="PS51722">
    <property type="entry name" value="G_TR_2"/>
    <property type="match status" value="1"/>
</dbReference>
<evidence type="ECO:0000255" key="1">
    <source>
        <dbReference type="HAMAP-Rule" id="MF_00072"/>
    </source>
</evidence>
<organism>
    <name type="scientific">Edwardsiella ictaluri (strain 93-146)</name>
    <dbReference type="NCBI Taxonomy" id="634503"/>
    <lineage>
        <taxon>Bacteria</taxon>
        <taxon>Pseudomonadati</taxon>
        <taxon>Pseudomonadota</taxon>
        <taxon>Gammaproteobacteria</taxon>
        <taxon>Enterobacterales</taxon>
        <taxon>Hafniaceae</taxon>
        <taxon>Edwardsiella</taxon>
    </lineage>
</organism>
<sequence>MSPSEYAREVAKRRTFAIISHPDAGKTTITEKVLLFGQAIQVAGTVKGRGSSQHAKSDWMEMEKQRGISITTSVMQFPYHDCLVNLLDTPGHEDFSEDTYRTLTAVDCCLMVIDAAKGVEDRTRKLMEVTRLRDTPILTFMNKLDRDIRDPMELLDEVESELRIACAPITWPIGCGKLFKGVYHLYKDETYLYQSGKGHTIQEVRVIKGLDNPLLDTAVGEDLAAQLREELELVQGASTEFEEEAFLNGQLTPVFFGTALGNFGVDHMLDGLVAWAPAPMPRMTDVRKVSADEEKFSGFVFKIQANMDPKHRDRVAFMRVVSGRYDKGMKLRQVRTGKDVVIADALTFMAGDRAHVEEAYPGDIIGLHNHGTIQIGDTFTQGEEMKFTGIPNFAPELFRRIRLRDPLKQKQLLKGLVQLSEEGAVQVFRPVANNDLIVGAVGVLQFDVVVARLKSEYNVEAIYESVNVSTARWVECDDVKKFDEFQRKNELHLALDGGDNLAYIAPTMVNLNLTQERYPEVRFRKTREH</sequence>
<keyword id="KW-0963">Cytoplasm</keyword>
<keyword id="KW-0342">GTP-binding</keyword>
<keyword id="KW-0547">Nucleotide-binding</keyword>
<keyword id="KW-0648">Protein biosynthesis</keyword>
<accession>C5BHI4</accession>
<protein>
    <recommendedName>
        <fullName evidence="1">Peptide chain release factor 3</fullName>
        <shortName evidence="1">RF-3</shortName>
    </recommendedName>
</protein>